<proteinExistence type="evidence at protein level"/>
<dbReference type="EMBL" id="Y09427">
    <property type="protein sequence ID" value="CAA70578.1"/>
    <property type="molecule type" value="mRNA"/>
</dbReference>
<dbReference type="EMBL" id="AJ011627">
    <property type="protein sequence ID" value="CAB56579.1"/>
    <property type="molecule type" value="Genomic_DNA"/>
</dbReference>
<dbReference type="EMBL" id="AJ242959">
    <property type="protein sequence ID" value="CAB94233.1"/>
    <property type="status" value="ALT_INIT"/>
    <property type="molecule type" value="mRNA"/>
</dbReference>
<dbReference type="EMBL" id="AJ011633">
    <property type="protein sequence ID" value="CAB56585.1"/>
    <property type="molecule type" value="mRNA"/>
</dbReference>
<dbReference type="EMBL" id="U78721">
    <property type="protein sequence ID" value="AAC69133.2"/>
    <property type="molecule type" value="Genomic_DNA"/>
</dbReference>
<dbReference type="EMBL" id="CP002685">
    <property type="protein sequence ID" value="AEC08889.1"/>
    <property type="molecule type" value="Genomic_DNA"/>
</dbReference>
<dbReference type="EMBL" id="AK118179">
    <property type="protein sequence ID" value="BAC42802.1"/>
    <property type="molecule type" value="mRNA"/>
</dbReference>
<dbReference type="EMBL" id="BT005443">
    <property type="protein sequence ID" value="AAO63863.1"/>
    <property type="molecule type" value="mRNA"/>
</dbReference>
<dbReference type="EMBL" id="AY084312">
    <property type="protein sequence ID" value="AAM67271.1"/>
    <property type="molecule type" value="mRNA"/>
</dbReference>
<dbReference type="PIR" id="H84749">
    <property type="entry name" value="H84749"/>
</dbReference>
<dbReference type="PIR" id="T52597">
    <property type="entry name" value="T52597"/>
</dbReference>
<dbReference type="RefSeq" id="NP_565771.1">
    <property type="nucleotide sequence ID" value="NM_128940.2"/>
</dbReference>
<dbReference type="SMR" id="P93015"/>
<dbReference type="BioGRID" id="3295">
    <property type="interactions" value="1"/>
</dbReference>
<dbReference type="STRING" id="3702.P93015"/>
<dbReference type="iPTMnet" id="P93015"/>
<dbReference type="PaxDb" id="3702-AT2G33810.1"/>
<dbReference type="ProteomicsDB" id="234096"/>
<dbReference type="EnsemblPlants" id="AT2G33810.1">
    <property type="protein sequence ID" value="AT2G33810.1"/>
    <property type="gene ID" value="AT2G33810"/>
</dbReference>
<dbReference type="GeneID" id="817948"/>
<dbReference type="Gramene" id="AT2G33810.1">
    <property type="protein sequence ID" value="AT2G33810.1"/>
    <property type="gene ID" value="AT2G33810"/>
</dbReference>
<dbReference type="KEGG" id="ath:AT2G33810"/>
<dbReference type="Araport" id="AT2G33810"/>
<dbReference type="TAIR" id="AT2G33810">
    <property type="gene designation" value="SPL3"/>
</dbReference>
<dbReference type="eggNOG" id="ENOG502RZTN">
    <property type="taxonomic scope" value="Eukaryota"/>
</dbReference>
<dbReference type="HOGENOM" id="CLU_065896_2_0_1"/>
<dbReference type="InParanoid" id="P93015"/>
<dbReference type="OMA" id="CTADMSK"/>
<dbReference type="OrthoDB" id="514967at2759"/>
<dbReference type="PhylomeDB" id="P93015"/>
<dbReference type="PRO" id="PR:P93015"/>
<dbReference type="Proteomes" id="UP000006548">
    <property type="component" value="Chromosome 2"/>
</dbReference>
<dbReference type="ExpressionAtlas" id="P93015">
    <property type="expression patterns" value="baseline and differential"/>
</dbReference>
<dbReference type="GO" id="GO:0005737">
    <property type="term" value="C:cytoplasm"/>
    <property type="evidence" value="ECO:0007669"/>
    <property type="project" value="UniProtKB-SubCell"/>
</dbReference>
<dbReference type="GO" id="GO:0005634">
    <property type="term" value="C:nucleus"/>
    <property type="evidence" value="ECO:0000314"/>
    <property type="project" value="TAIR"/>
</dbReference>
<dbReference type="GO" id="GO:0003677">
    <property type="term" value="F:DNA binding"/>
    <property type="evidence" value="ECO:0000314"/>
    <property type="project" value="TAIR"/>
</dbReference>
<dbReference type="GO" id="GO:0003700">
    <property type="term" value="F:DNA-binding transcription factor activity"/>
    <property type="evidence" value="ECO:0000250"/>
    <property type="project" value="TAIR"/>
</dbReference>
<dbReference type="GO" id="GO:0008270">
    <property type="term" value="F:zinc ion binding"/>
    <property type="evidence" value="ECO:0007669"/>
    <property type="project" value="UniProtKB-KW"/>
</dbReference>
<dbReference type="GO" id="GO:0030154">
    <property type="term" value="P:cell differentiation"/>
    <property type="evidence" value="ECO:0007669"/>
    <property type="project" value="UniProtKB-KW"/>
</dbReference>
<dbReference type="GO" id="GO:0009908">
    <property type="term" value="P:flower development"/>
    <property type="evidence" value="ECO:0000304"/>
    <property type="project" value="TAIR"/>
</dbReference>
<dbReference type="GO" id="GO:0010229">
    <property type="term" value="P:inflorescence development"/>
    <property type="evidence" value="ECO:0000315"/>
    <property type="project" value="TAIR"/>
</dbReference>
<dbReference type="GO" id="GO:0009911">
    <property type="term" value="P:positive regulation of flower development"/>
    <property type="evidence" value="ECO:0000315"/>
    <property type="project" value="TAIR"/>
</dbReference>
<dbReference type="GO" id="GO:0010321">
    <property type="term" value="P:regulation of vegetative phase change"/>
    <property type="evidence" value="ECO:0000315"/>
    <property type="project" value="TAIR"/>
</dbReference>
<dbReference type="GO" id="GO:0010228">
    <property type="term" value="P:vegetative to reproductive phase transition of meristem"/>
    <property type="evidence" value="ECO:0000315"/>
    <property type="project" value="TAIR"/>
</dbReference>
<dbReference type="FunFam" id="4.10.1100.10:FF:000001">
    <property type="entry name" value="Squamosa promoter-binding-like protein 14"/>
    <property type="match status" value="1"/>
</dbReference>
<dbReference type="Gene3D" id="4.10.1100.10">
    <property type="entry name" value="Transcription factor, SBP-box domain"/>
    <property type="match status" value="1"/>
</dbReference>
<dbReference type="InterPro" id="IPR044817">
    <property type="entry name" value="SBP-like"/>
</dbReference>
<dbReference type="InterPro" id="IPR004333">
    <property type="entry name" value="SBP_dom"/>
</dbReference>
<dbReference type="InterPro" id="IPR017238">
    <property type="entry name" value="SBP_fam"/>
</dbReference>
<dbReference type="InterPro" id="IPR036893">
    <property type="entry name" value="SBP_sf"/>
</dbReference>
<dbReference type="PANTHER" id="PTHR31251:SF212">
    <property type="entry name" value="SQUAMOSA PROMOTER-BINDING-LIKE PROTEIN 3"/>
    <property type="match status" value="1"/>
</dbReference>
<dbReference type="PANTHER" id="PTHR31251">
    <property type="entry name" value="SQUAMOSA PROMOTER-BINDING-LIKE PROTEIN 4"/>
    <property type="match status" value="1"/>
</dbReference>
<dbReference type="Pfam" id="PF03110">
    <property type="entry name" value="SBP"/>
    <property type="match status" value="1"/>
</dbReference>
<dbReference type="PIRSF" id="PIRSF037575">
    <property type="entry name" value="SBP"/>
    <property type="match status" value="1"/>
</dbReference>
<dbReference type="SUPFAM" id="SSF103612">
    <property type="entry name" value="SBT domain"/>
    <property type="match status" value="1"/>
</dbReference>
<dbReference type="PROSITE" id="PS51141">
    <property type="entry name" value="ZF_SBP"/>
    <property type="match status" value="1"/>
</dbReference>
<evidence type="ECO:0000250" key="1"/>
<evidence type="ECO:0000255" key="2"/>
<evidence type="ECO:0000255" key="3">
    <source>
        <dbReference type="PROSITE-ProRule" id="PRU00470"/>
    </source>
</evidence>
<evidence type="ECO:0000256" key="4">
    <source>
        <dbReference type="SAM" id="MobiDB-lite"/>
    </source>
</evidence>
<evidence type="ECO:0000269" key="5">
    <source>
    </source>
</evidence>
<evidence type="ECO:0000269" key="6">
    <source>
    </source>
</evidence>
<evidence type="ECO:0000269" key="7">
    <source>
    </source>
</evidence>
<evidence type="ECO:0000269" key="8">
    <source>
    </source>
</evidence>
<evidence type="ECO:0000269" key="9">
    <source>
    </source>
</evidence>
<evidence type="ECO:0000269" key="10">
    <source>
    </source>
</evidence>
<evidence type="ECO:0000305" key="11"/>
<feature type="chain" id="PRO_0000132724" description="Squamosa promoter-binding-like protein 3">
    <location>
        <begin position="1"/>
        <end position="131"/>
    </location>
</feature>
<feature type="zinc finger region" description="SBP-type" evidence="3">
    <location>
        <begin position="51"/>
        <end position="128"/>
    </location>
</feature>
<feature type="region of interest" description="Disordered" evidence="4">
    <location>
        <begin position="1"/>
        <end position="54"/>
    </location>
</feature>
<feature type="region of interest" description="Sufficient and necessary for DNA binding">
    <location>
        <begin position="45"/>
        <end position="129"/>
    </location>
</feature>
<feature type="short sequence motif" description="Bipartite nuclear localization signal" evidence="2">
    <location>
        <begin position="111"/>
        <end position="127"/>
    </location>
</feature>
<feature type="compositionally biased region" description="Basic and acidic residues" evidence="4">
    <location>
        <begin position="1"/>
        <end position="17"/>
    </location>
</feature>
<feature type="compositionally biased region" description="Acidic residues" evidence="4">
    <location>
        <begin position="18"/>
        <end position="38"/>
    </location>
</feature>
<feature type="binding site" evidence="3">
    <location>
        <position position="54"/>
    </location>
    <ligand>
        <name>Zn(2+)</name>
        <dbReference type="ChEBI" id="CHEBI:29105"/>
        <label>1</label>
    </ligand>
</feature>
<feature type="binding site" evidence="3">
    <location>
        <position position="59"/>
    </location>
    <ligand>
        <name>Zn(2+)</name>
        <dbReference type="ChEBI" id="CHEBI:29105"/>
        <label>1</label>
    </ligand>
</feature>
<feature type="binding site" evidence="3">
    <location>
        <position position="76"/>
    </location>
    <ligand>
        <name>Zn(2+)</name>
        <dbReference type="ChEBI" id="CHEBI:29105"/>
        <label>1</label>
    </ligand>
</feature>
<feature type="binding site" evidence="3">
    <location>
        <position position="79"/>
    </location>
    <ligand>
        <name>Zn(2+)</name>
        <dbReference type="ChEBI" id="CHEBI:29105"/>
        <label>1</label>
    </ligand>
</feature>
<feature type="binding site" evidence="3">
    <location>
        <position position="95"/>
    </location>
    <ligand>
        <name>Zn(2+)</name>
        <dbReference type="ChEBI" id="CHEBI:29105"/>
        <label>2</label>
    </ligand>
</feature>
<feature type="binding site" evidence="3">
    <location>
        <position position="98"/>
    </location>
    <ligand>
        <name>Zn(2+)</name>
        <dbReference type="ChEBI" id="CHEBI:29105"/>
        <label>2</label>
    </ligand>
</feature>
<feature type="binding site" evidence="3">
    <location>
        <position position="102"/>
    </location>
    <ligand>
        <name>Zn(2+)</name>
        <dbReference type="ChEBI" id="CHEBI:29105"/>
        <label>2</label>
    </ligand>
</feature>
<feature type="binding site" evidence="3">
    <location>
        <position position="114"/>
    </location>
    <ligand>
        <name>Zn(2+)</name>
        <dbReference type="ChEBI" id="CHEBI:29105"/>
        <label>2</label>
    </ligand>
</feature>
<feature type="mutagenesis site" description="Slight decrease in DNA binding efficiency." evidence="8">
    <original>D</original>
    <variation>A</variation>
    <location>
        <position position="108"/>
    </location>
</feature>
<feature type="mutagenesis site" description="Slight decrease in DNA binding efficiency." evidence="8">
    <original>R</original>
    <variation>Q</variation>
    <location>
        <position position="112"/>
    </location>
</feature>
<feature type="mutagenesis site" description="Slight decrease in DNA binding efficiency." evidence="8">
    <original>S</original>
    <variation>A</variation>
    <location>
        <position position="113"/>
    </location>
</feature>
<feature type="mutagenesis site" description="Complete loss of DNA binding." evidence="8">
    <original>S</original>
    <variation>D</variation>
    <location>
        <position position="113"/>
    </location>
</feature>
<feature type="mutagenesis site" description="Increase in nuclear import efficiency." evidence="8">
    <original>C</original>
    <variation>A</variation>
    <location>
        <position position="114"/>
    </location>
</feature>
<feature type="sequence conflict" description="In Ref. 7; AAM67271." evidence="11" ref="7">
    <original>M</original>
    <variation>I</variation>
    <location>
        <position position="63"/>
    </location>
</feature>
<protein>
    <recommendedName>
        <fullName>Squamosa promoter-binding-like protein 3</fullName>
    </recommendedName>
</protein>
<comment type="function">
    <text evidence="8 9 10">Trans-acting factor that binds specifically to the consensus nucleotide sequence 5'-TNCGTACAA-3' of AP1 promoter. Binds specifically to the 5'-GTAC-3' core sequence. Promotes both vegetative phase change and flowering. Regulates phase-specific patterns of leaf epidermal differentiation and flowering time, but does not seem to affect leaf shape.</text>
</comment>
<comment type="cofactor">
    <cofactor evidence="1">
        <name>Zn(2+)</name>
        <dbReference type="ChEBI" id="CHEBI:29105"/>
    </cofactor>
    <text evidence="1">Binds 2 Zn(2+) ions per subunit.</text>
</comment>
<comment type="subcellular location">
    <subcellularLocation>
        <location evidence="8">Nucleus</location>
    </subcellularLocation>
    <subcellularLocation>
        <location evidence="8">Cytoplasm</location>
    </subcellularLocation>
    <text>Mostly located in nucleus.</text>
</comment>
<comment type="tissue specificity">
    <text evidence="5 10">Expressed in vegetative and inflorescence apical meristems, floral meristems, leaf and flower organ primordia, inflorescence stem tissue and to lower extent in roots.</text>
</comment>
<comment type="developmental stage">
    <text evidence="5 7 9 10">Increases during floral transition and stay high thereafter.</text>
</comment>
<comment type="induction">
    <text evidence="6 9">Negatively regulated by microRNAs miR156.</text>
</comment>
<comment type="domain">
    <text>The SBP-type zinc finger is required for the binding to DNA.</text>
</comment>
<comment type="disruption phenotype">
    <text evidence="9">Plants flower early and have a significantly reduced number of juvenile, adult and cauline leaves, with a shorter petiole and a more acute leaf base in the first two leaves.</text>
</comment>
<comment type="caution">
    <text evidence="11">It is uncertain whether Met-1 or Met-3 is the initiator.</text>
</comment>
<comment type="sequence caution" evidence="11">
    <conflict type="erroneous initiation">
        <sequence resource="EMBL-CDS" id="CAB94233"/>
    </conflict>
</comment>
<keyword id="KW-0963">Cytoplasm</keyword>
<keyword id="KW-0217">Developmental protein</keyword>
<keyword id="KW-0221">Differentiation</keyword>
<keyword id="KW-0238">DNA-binding</keyword>
<keyword id="KW-0287">Flowering</keyword>
<keyword id="KW-0479">Metal-binding</keyword>
<keyword id="KW-0539">Nucleus</keyword>
<keyword id="KW-1185">Reference proteome</keyword>
<keyword id="KW-0804">Transcription</keyword>
<keyword id="KW-0805">Transcription regulation</keyword>
<keyword id="KW-0862">Zinc</keyword>
<keyword id="KW-0863">Zinc-finger</keyword>
<name>SPL3_ARATH</name>
<organism>
    <name type="scientific">Arabidopsis thaliana</name>
    <name type="common">Mouse-ear cress</name>
    <dbReference type="NCBI Taxonomy" id="3702"/>
    <lineage>
        <taxon>Eukaryota</taxon>
        <taxon>Viridiplantae</taxon>
        <taxon>Streptophyta</taxon>
        <taxon>Embryophyta</taxon>
        <taxon>Tracheophyta</taxon>
        <taxon>Spermatophyta</taxon>
        <taxon>Magnoliopsida</taxon>
        <taxon>eudicotyledons</taxon>
        <taxon>Gunneridae</taxon>
        <taxon>Pentapetalae</taxon>
        <taxon>rosids</taxon>
        <taxon>malvids</taxon>
        <taxon>Brassicales</taxon>
        <taxon>Brassicaceae</taxon>
        <taxon>Camelineae</taxon>
        <taxon>Arabidopsis</taxon>
    </lineage>
</organism>
<reference key="1">
    <citation type="journal article" date="1997" name="Plant J.">
        <title>Functional analysis of the Arabidopsis thaliana SBP-box gene SPL3: a novel gene involved in the floral transition.</title>
        <authorList>
            <person name="Cardon G.H."/>
            <person name="Hoehmann S."/>
            <person name="Nettesheim K."/>
            <person name="Saedler H."/>
            <person name="Huijser P."/>
        </authorList>
    </citation>
    <scope>NUCLEOTIDE SEQUENCE [GENOMIC DNA / MRNA]</scope>
    <scope>FUNCTION</scope>
    <scope>TISSUE SPECIFICITY</scope>
    <scope>DEVELOPMENTAL STAGE</scope>
    <source>
        <strain>cv. Columbia</strain>
        <strain>cv. Landsberg erecta</strain>
        <tissue>Flower</tissue>
    </source>
</reference>
<reference key="2">
    <citation type="journal article" date="1999" name="Gene">
        <title>Molecular characterization of the Arabidopsis SBP-box genes.</title>
        <authorList>
            <person name="Cardon G.H."/>
            <person name="Hoehmann S."/>
            <person name="Klein J."/>
            <person name="Nettesheim K."/>
            <person name="Saedler H."/>
            <person name="Huijser P."/>
        </authorList>
    </citation>
    <scope>NUCLEOTIDE SEQUENCE [MRNA]</scope>
    <scope>TISSUE SPECIFICITY</scope>
    <scope>DEVELOPMENTAL STAGE</scope>
    <source>
        <strain>cv. Landsberg erecta</strain>
        <tissue>Flower</tissue>
    </source>
</reference>
<reference key="3">
    <citation type="journal article" date="1999" name="Nature">
        <title>Sequence and analysis of chromosome 2 of the plant Arabidopsis thaliana.</title>
        <authorList>
            <person name="Lin X."/>
            <person name="Kaul S."/>
            <person name="Rounsley S.D."/>
            <person name="Shea T.P."/>
            <person name="Benito M.-I."/>
            <person name="Town C.D."/>
            <person name="Fujii C.Y."/>
            <person name="Mason T.M."/>
            <person name="Bowman C.L."/>
            <person name="Barnstead M.E."/>
            <person name="Feldblyum T.V."/>
            <person name="Buell C.R."/>
            <person name="Ketchum K.A."/>
            <person name="Lee J.J."/>
            <person name="Ronning C.M."/>
            <person name="Koo H.L."/>
            <person name="Moffat K.S."/>
            <person name="Cronin L.A."/>
            <person name="Shen M."/>
            <person name="Pai G."/>
            <person name="Van Aken S."/>
            <person name="Umayam L."/>
            <person name="Tallon L.J."/>
            <person name="Gill J.E."/>
            <person name="Adams M.D."/>
            <person name="Carrera A.J."/>
            <person name="Creasy T.H."/>
            <person name="Goodman H.M."/>
            <person name="Somerville C.R."/>
            <person name="Copenhaver G.P."/>
            <person name="Preuss D."/>
            <person name="Nierman W.C."/>
            <person name="White O."/>
            <person name="Eisen J.A."/>
            <person name="Salzberg S.L."/>
            <person name="Fraser C.M."/>
            <person name="Venter J.C."/>
        </authorList>
    </citation>
    <scope>NUCLEOTIDE SEQUENCE [LARGE SCALE GENOMIC DNA]</scope>
    <source>
        <strain>cv. Columbia</strain>
    </source>
</reference>
<reference key="4">
    <citation type="journal article" date="2017" name="Plant J.">
        <title>Araport11: a complete reannotation of the Arabidopsis thaliana reference genome.</title>
        <authorList>
            <person name="Cheng C.Y."/>
            <person name="Krishnakumar V."/>
            <person name="Chan A.P."/>
            <person name="Thibaud-Nissen F."/>
            <person name="Schobel S."/>
            <person name="Town C.D."/>
        </authorList>
    </citation>
    <scope>GENOME REANNOTATION</scope>
    <source>
        <strain>cv. Columbia</strain>
    </source>
</reference>
<reference key="5">
    <citation type="journal article" date="2002" name="Science">
        <title>Functional annotation of a full-length Arabidopsis cDNA collection.</title>
        <authorList>
            <person name="Seki M."/>
            <person name="Narusaka M."/>
            <person name="Kamiya A."/>
            <person name="Ishida J."/>
            <person name="Satou M."/>
            <person name="Sakurai T."/>
            <person name="Nakajima M."/>
            <person name="Enju A."/>
            <person name="Akiyama K."/>
            <person name="Oono Y."/>
            <person name="Muramatsu M."/>
            <person name="Hayashizaki Y."/>
            <person name="Kawai J."/>
            <person name="Carninci P."/>
            <person name="Itoh M."/>
            <person name="Ishii Y."/>
            <person name="Arakawa T."/>
            <person name="Shibata K."/>
            <person name="Shinagawa A."/>
            <person name="Shinozaki K."/>
        </authorList>
    </citation>
    <scope>NUCLEOTIDE SEQUENCE [LARGE SCALE MRNA]</scope>
    <source>
        <strain>cv. Columbia</strain>
    </source>
</reference>
<reference key="6">
    <citation type="journal article" date="2003" name="Science">
        <title>Empirical analysis of transcriptional activity in the Arabidopsis genome.</title>
        <authorList>
            <person name="Yamada K."/>
            <person name="Lim J."/>
            <person name="Dale J.M."/>
            <person name="Chen H."/>
            <person name="Shinn P."/>
            <person name="Palm C.J."/>
            <person name="Southwick A.M."/>
            <person name="Wu H.C."/>
            <person name="Kim C.J."/>
            <person name="Nguyen M."/>
            <person name="Pham P.K."/>
            <person name="Cheuk R.F."/>
            <person name="Karlin-Newmann G."/>
            <person name="Liu S.X."/>
            <person name="Lam B."/>
            <person name="Sakano H."/>
            <person name="Wu T."/>
            <person name="Yu G."/>
            <person name="Miranda M."/>
            <person name="Quach H.L."/>
            <person name="Tripp M."/>
            <person name="Chang C.H."/>
            <person name="Lee J.M."/>
            <person name="Toriumi M.J."/>
            <person name="Chan M.M."/>
            <person name="Tang C.C."/>
            <person name="Onodera C.S."/>
            <person name="Deng J.M."/>
            <person name="Akiyama K."/>
            <person name="Ansari Y."/>
            <person name="Arakawa T."/>
            <person name="Banh J."/>
            <person name="Banno F."/>
            <person name="Bowser L."/>
            <person name="Brooks S.Y."/>
            <person name="Carninci P."/>
            <person name="Chao Q."/>
            <person name="Choy N."/>
            <person name="Enju A."/>
            <person name="Goldsmith A.D."/>
            <person name="Gurjal M."/>
            <person name="Hansen N.F."/>
            <person name="Hayashizaki Y."/>
            <person name="Johnson-Hopson C."/>
            <person name="Hsuan V.W."/>
            <person name="Iida K."/>
            <person name="Karnes M."/>
            <person name="Khan S."/>
            <person name="Koesema E."/>
            <person name="Ishida J."/>
            <person name="Jiang P.X."/>
            <person name="Jones T."/>
            <person name="Kawai J."/>
            <person name="Kamiya A."/>
            <person name="Meyers C."/>
            <person name="Nakajima M."/>
            <person name="Narusaka M."/>
            <person name="Seki M."/>
            <person name="Sakurai T."/>
            <person name="Satou M."/>
            <person name="Tamse R."/>
            <person name="Vaysberg M."/>
            <person name="Wallender E.K."/>
            <person name="Wong C."/>
            <person name="Yamamura Y."/>
            <person name="Yuan S."/>
            <person name="Shinozaki K."/>
            <person name="Davis R.W."/>
            <person name="Theologis A."/>
            <person name="Ecker J.R."/>
        </authorList>
    </citation>
    <scope>NUCLEOTIDE SEQUENCE [LARGE SCALE MRNA]</scope>
    <source>
        <strain>cv. Columbia</strain>
    </source>
</reference>
<reference key="7">
    <citation type="submission" date="2002-03" db="EMBL/GenBank/DDBJ databases">
        <title>Full-length cDNA from Arabidopsis thaliana.</title>
        <authorList>
            <person name="Brover V.V."/>
            <person name="Troukhan M.E."/>
            <person name="Alexandrov N.A."/>
            <person name="Lu Y.-P."/>
            <person name="Flavell R.B."/>
            <person name="Feldmann K.A."/>
        </authorList>
    </citation>
    <scope>NUCLEOTIDE SEQUENCE [LARGE SCALE MRNA]</scope>
</reference>
<reference key="8">
    <citation type="journal article" date="2002" name="Cell">
        <title>Prediction of plant microRNA targets.</title>
        <authorList>
            <person name="Rhoades M.W."/>
            <person name="Reinhart B.J."/>
            <person name="Lim L.P."/>
            <person name="Burge C.B."/>
            <person name="Bartel B."/>
            <person name="Bartel D.P."/>
        </authorList>
    </citation>
    <scope>INDUCTION</scope>
</reference>
<reference key="9">
    <citation type="journal article" date="2003" name="Development">
        <title>Dissection of floral induction pathways using global expression analysis.</title>
        <authorList>
            <person name="Schmid M."/>
            <person name="Uhlenhaut N.H."/>
            <person name="Godard F."/>
            <person name="Demar M."/>
            <person name="Bressan R."/>
            <person name="Weigel D."/>
            <person name="Lohmann J.U."/>
        </authorList>
    </citation>
    <scope>DEVELOPMENTAL STAGE</scope>
</reference>
<reference key="10">
    <citation type="journal article" date="2005" name="J. Mol. Biol.">
        <title>Functional dissection of the plant-specific SBP-domain: overlap of the DNA-binding and nuclear localization domains.</title>
        <authorList>
            <person name="Birkenbihl R.P."/>
            <person name="Jach G."/>
            <person name="Saedler H."/>
            <person name="Huijser P."/>
        </authorList>
    </citation>
    <scope>FUNCTION</scope>
    <scope>SUBCELLULAR LOCATION</scope>
    <scope>NUCLEAR LOCALIZATION SIGNAL</scope>
    <scope>REGION</scope>
    <scope>MUTAGENESIS OF ASP-108; ARG-112; SER-113 AND CYS-114</scope>
</reference>
<reference key="11">
    <citation type="journal article" date="2006" name="Development">
        <title>Temporal regulation of shoot development in Arabidopsis thaliana by miR156 and its target SPL3.</title>
        <authorList>
            <person name="Wu G."/>
            <person name="Poethig R.S."/>
        </authorList>
    </citation>
    <scope>FUNCTION</scope>
    <scope>DISRUPTION PHENOTYPE</scope>
    <scope>DEVELOPMENTAL STAGE</scope>
    <scope>INDUCTION</scope>
</reference>
<gene>
    <name type="primary">SPL3</name>
    <name type="ordered locus">At2g33810</name>
    <name type="ORF">T1B8.11</name>
</gene>
<sequence>MSMRRSKAEGKRSLRELSEEEEEEEETEDEDTFEEEEALEKKQKGKATSSSGVCQVESCTADMSKAKQYHKRHKVCQFHAKAPHVRISGLHQRFCQQCSRFHALSEFDEAKRSCRRRLAGHNERRRKSTTD</sequence>
<accession>P93015</accession>
<accession>Q8LGE8</accession>
<accession>Q9LF84</accession>